<name>PLCA_DICCH</name>
<keyword id="KW-0903">Direct protein sequencing</keyword>
<keyword id="KW-0378">Hydrolase</keyword>
<keyword id="KW-0442">Lipid degradation</keyword>
<keyword id="KW-0443">Lipid metabolism</keyword>
<keyword id="KW-0964">Secreted</keyword>
<accession>Q47499</accession>
<comment type="subcellular location">
    <subcellularLocation>
        <location>Secreted</location>
    </subcellularLocation>
</comment>
<gene>
    <name type="primary">plcA</name>
</gene>
<reference key="1">
    <citation type="journal article" date="1992" name="Mol. Microbiol.">
        <title>Cloning and characterization of a phospholipase gene from Erwinia chrysanthemi EC16.</title>
        <authorList>
            <person name="Keen N.T."/>
            <person name="Ridgway D."/>
            <person name="Boyd C."/>
        </authorList>
    </citation>
    <scope>NUCLEOTIDE SEQUENCE [GENOMIC DNA]</scope>
    <scope>PROTEIN SEQUENCE OF 1-10</scope>
    <source>
        <strain>EC16</strain>
    </source>
</reference>
<proteinExistence type="evidence at protein level"/>
<sequence>MEKVLIWFCGTGTTKQDFLANVEISGFSAIVAIDGIGTAAMLTKTQALAKRANWGGSFVDMSETLGVLYDQVNGYDDRAGVVTLDSLFPLVDYLKTLKEYQLVVGGHSRGAAVGLTEFLAELYHLAVQNQAPGVWANAKTIRLVVVDPVQGQQDADKDTNAFNAILKDKTLAQILAELETKWFGGREVFDTLVYSARYDARSSFAFDSRWYRFITEQMGKQAGPAKRAKLVMAGFRHSAPVSKEDEISALYQGKGVAPIAFLQQLVSFDPNWEQSARLLSQIENGYLDQLAAGAKTDLISQLDKQTSLLSTALPALSAANRCKKRCRRITRKNRNTAGSTAISTGRRRFNASYQVTSD</sequence>
<dbReference type="EC" id="3.1.-.-"/>
<dbReference type="EMBL" id="Z11517">
    <property type="protein sequence ID" value="CAA77606.1"/>
    <property type="molecule type" value="Genomic_DNA"/>
</dbReference>
<dbReference type="PIR" id="S20037">
    <property type="entry name" value="S20037"/>
</dbReference>
<dbReference type="GO" id="GO:0005576">
    <property type="term" value="C:extracellular region"/>
    <property type="evidence" value="ECO:0007669"/>
    <property type="project" value="UniProtKB-SubCell"/>
</dbReference>
<dbReference type="GO" id="GO:0016787">
    <property type="term" value="F:hydrolase activity"/>
    <property type="evidence" value="ECO:0007669"/>
    <property type="project" value="UniProtKB-KW"/>
</dbReference>
<dbReference type="GO" id="GO:0016042">
    <property type="term" value="P:lipid catabolic process"/>
    <property type="evidence" value="ECO:0007669"/>
    <property type="project" value="UniProtKB-KW"/>
</dbReference>
<organism>
    <name type="scientific">Dickeya chrysanthemi</name>
    <name type="common">Pectobacterium chrysanthemi</name>
    <name type="synonym">Erwinia chrysanthemi</name>
    <dbReference type="NCBI Taxonomy" id="556"/>
    <lineage>
        <taxon>Bacteria</taxon>
        <taxon>Pseudomonadati</taxon>
        <taxon>Pseudomonadota</taxon>
        <taxon>Gammaproteobacteria</taxon>
        <taxon>Enterobacterales</taxon>
        <taxon>Pectobacteriaceae</taxon>
        <taxon>Dickeya</taxon>
    </lineage>
</organism>
<feature type="chain" id="PRO_0000058454" description="Extracellular phospholipase C">
    <location>
        <begin position="1"/>
        <end position="358"/>
    </location>
</feature>
<protein>
    <recommendedName>
        <fullName>Extracellular phospholipase C</fullName>
        <ecNumber>3.1.-.-</ecNumber>
    </recommendedName>
</protein>